<comment type="function">
    <text evidence="1">Probably involved in ribonucleotide reductase function.</text>
</comment>
<comment type="similarity">
    <text evidence="2">Belongs to the NrdI family.</text>
</comment>
<sequence>MHKDIKLVKETEIRKPIGSPFIVYFSSISNNTHRFIEKLGFQHKRIPVDITQSITVSNEYVLICPTYSGGGNQVEGAVPKQVIQFLNNKHNRELCRGVIASGNTNFGDTFCLAGTVISKKLNVPLLYQFELLGTKNDVEQTQKIIANFFQNSN</sequence>
<proteinExistence type="inferred from homology"/>
<protein>
    <recommendedName>
        <fullName>Protein NrdI</fullName>
    </recommendedName>
</protein>
<keyword id="KW-1185">Reference proteome</keyword>
<gene>
    <name type="primary">nrdI</name>
    <name type="ordered locus">MG230</name>
</gene>
<feature type="chain" id="PRO_0000164321" description="Protein NrdI">
    <location>
        <begin position="1"/>
        <end position="153"/>
    </location>
</feature>
<reference key="1">
    <citation type="journal article" date="1995" name="Science">
        <title>The minimal gene complement of Mycoplasma genitalium.</title>
        <authorList>
            <person name="Fraser C.M."/>
            <person name="Gocayne J.D."/>
            <person name="White O."/>
            <person name="Adams M.D."/>
            <person name="Clayton R.A."/>
            <person name="Fleischmann R.D."/>
            <person name="Bult C.J."/>
            <person name="Kerlavage A.R."/>
            <person name="Sutton G.G."/>
            <person name="Kelley J.M."/>
            <person name="Fritchman J.L."/>
            <person name="Weidman J.F."/>
            <person name="Small K.V."/>
            <person name="Sandusky M."/>
            <person name="Fuhrmann J.L."/>
            <person name="Nguyen D.T."/>
            <person name="Utterback T.R."/>
            <person name="Saudek D.M."/>
            <person name="Phillips C.A."/>
            <person name="Merrick J.M."/>
            <person name="Tomb J.-F."/>
            <person name="Dougherty B.A."/>
            <person name="Bott K.F."/>
            <person name="Hu P.-C."/>
            <person name="Lucier T.S."/>
            <person name="Peterson S.N."/>
            <person name="Smith H.O."/>
            <person name="Hutchison C.A. III"/>
            <person name="Venter J.C."/>
        </authorList>
    </citation>
    <scope>NUCLEOTIDE SEQUENCE [LARGE SCALE GENOMIC DNA]</scope>
    <source>
        <strain>ATCC 33530 / DSM 19775 / NCTC 10195 / G37</strain>
    </source>
</reference>
<name>NRDI_MYCGE</name>
<evidence type="ECO:0000250" key="1"/>
<evidence type="ECO:0000305" key="2"/>
<organism>
    <name type="scientific">Mycoplasma genitalium (strain ATCC 33530 / DSM 19775 / NCTC 10195 / G37)</name>
    <name type="common">Mycoplasmoides genitalium</name>
    <dbReference type="NCBI Taxonomy" id="243273"/>
    <lineage>
        <taxon>Bacteria</taxon>
        <taxon>Bacillati</taxon>
        <taxon>Mycoplasmatota</taxon>
        <taxon>Mycoplasmoidales</taxon>
        <taxon>Mycoplasmoidaceae</taxon>
        <taxon>Mycoplasmoides</taxon>
    </lineage>
</organism>
<dbReference type="EMBL" id="L43967">
    <property type="protein sequence ID" value="AAC71451.1"/>
    <property type="molecule type" value="Genomic_DNA"/>
</dbReference>
<dbReference type="PIR" id="D64225">
    <property type="entry name" value="D64225"/>
</dbReference>
<dbReference type="RefSeq" id="WP_010869386.1">
    <property type="nucleotide sequence ID" value="NC_000908.2"/>
</dbReference>
<dbReference type="SMR" id="P47472"/>
<dbReference type="FunCoup" id="P47472">
    <property type="interactions" value="12"/>
</dbReference>
<dbReference type="STRING" id="243273.MG_230"/>
<dbReference type="GeneID" id="88282376"/>
<dbReference type="KEGG" id="mge:MG_230"/>
<dbReference type="eggNOG" id="COG1780">
    <property type="taxonomic scope" value="Bacteria"/>
</dbReference>
<dbReference type="HOGENOM" id="CLU_114845_0_0_14"/>
<dbReference type="InParanoid" id="P47472"/>
<dbReference type="OrthoDB" id="350535at2"/>
<dbReference type="BioCyc" id="MGEN243273:G1GJ2-277-MONOMER"/>
<dbReference type="Proteomes" id="UP000000807">
    <property type="component" value="Chromosome"/>
</dbReference>
<dbReference type="GO" id="GO:0010181">
    <property type="term" value="F:FMN binding"/>
    <property type="evidence" value="ECO:0000318"/>
    <property type="project" value="GO_Central"/>
</dbReference>
<dbReference type="GO" id="GO:0036211">
    <property type="term" value="P:protein modification process"/>
    <property type="evidence" value="ECO:0007669"/>
    <property type="project" value="InterPro"/>
</dbReference>
<dbReference type="Gene3D" id="3.40.50.360">
    <property type="match status" value="1"/>
</dbReference>
<dbReference type="HAMAP" id="MF_00128">
    <property type="entry name" value="NrdI"/>
    <property type="match status" value="1"/>
</dbReference>
<dbReference type="InterPro" id="IPR029039">
    <property type="entry name" value="Flavoprotein-like_sf"/>
</dbReference>
<dbReference type="InterPro" id="IPR020852">
    <property type="entry name" value="RNR_Ib_NrdI_bac"/>
</dbReference>
<dbReference type="InterPro" id="IPR004465">
    <property type="entry name" value="RNR_NrdI"/>
</dbReference>
<dbReference type="NCBIfam" id="TIGR00333">
    <property type="entry name" value="nrdI"/>
    <property type="match status" value="1"/>
</dbReference>
<dbReference type="PANTHER" id="PTHR37297">
    <property type="entry name" value="PROTEIN NRDI"/>
    <property type="match status" value="1"/>
</dbReference>
<dbReference type="PANTHER" id="PTHR37297:SF1">
    <property type="entry name" value="PROTEIN NRDI"/>
    <property type="match status" value="1"/>
</dbReference>
<dbReference type="Pfam" id="PF07972">
    <property type="entry name" value="Flavodoxin_NdrI"/>
    <property type="match status" value="1"/>
</dbReference>
<dbReference type="PIRSF" id="PIRSF005087">
    <property type="entry name" value="NrdI"/>
    <property type="match status" value="1"/>
</dbReference>
<dbReference type="SUPFAM" id="SSF52218">
    <property type="entry name" value="Flavoproteins"/>
    <property type="match status" value="1"/>
</dbReference>
<accession>P47472</accession>